<keyword id="KW-1185">Reference proteome</keyword>
<keyword id="KW-0687">Ribonucleoprotein</keyword>
<keyword id="KW-0689">Ribosomal protein</keyword>
<comment type="subunit">
    <text evidence="1">Part of the 50S ribosomal subunit. Contacts protein L32.</text>
</comment>
<comment type="similarity">
    <text evidence="1">Belongs to the bacterial ribosomal protein bL17 family.</text>
</comment>
<sequence length="122" mass="13529">MGYRKLGRTSDQRKAMLRDLATSLIVNERIETTEARAKELRGVVDSLITLGKKGDLASRRQAAKVVRDVEILNEDDTTQTALQKLFGEIAPRYTDRQGGYTRVLKAGPRRGDGAESAIIELV</sequence>
<proteinExistence type="inferred from homology"/>
<feature type="chain" id="PRO_1000184043" description="Large ribosomal subunit protein bL17">
    <location>
        <begin position="1"/>
        <end position="122"/>
    </location>
</feature>
<evidence type="ECO:0000255" key="1">
    <source>
        <dbReference type="HAMAP-Rule" id="MF_01368"/>
    </source>
</evidence>
<evidence type="ECO:0000305" key="2"/>
<reference key="1">
    <citation type="journal article" date="2009" name="Appl. Environ. Microbiol.">
        <title>Genome analysis of the meat starter culture bacterium Staphylococcus carnosus TM300.</title>
        <authorList>
            <person name="Rosenstein R."/>
            <person name="Nerz C."/>
            <person name="Biswas L."/>
            <person name="Resch A."/>
            <person name="Raddatz G."/>
            <person name="Schuster S.C."/>
            <person name="Goetz F."/>
        </authorList>
    </citation>
    <scope>NUCLEOTIDE SEQUENCE [LARGE SCALE GENOMIC DNA]</scope>
    <source>
        <strain>TM300</strain>
    </source>
</reference>
<name>RL17_STACT</name>
<dbReference type="EMBL" id="AM295250">
    <property type="protein sequence ID" value="CAL28614.1"/>
    <property type="molecule type" value="Genomic_DNA"/>
</dbReference>
<dbReference type="RefSeq" id="WP_015900954.1">
    <property type="nucleotide sequence ID" value="NC_012121.1"/>
</dbReference>
<dbReference type="SMR" id="B9DM50"/>
<dbReference type="GeneID" id="93794167"/>
<dbReference type="KEGG" id="sca:SCA_1708"/>
<dbReference type="eggNOG" id="COG0203">
    <property type="taxonomic scope" value="Bacteria"/>
</dbReference>
<dbReference type="HOGENOM" id="CLU_074407_2_2_9"/>
<dbReference type="OrthoDB" id="9809073at2"/>
<dbReference type="BioCyc" id="SCAR396513:SCA_RS08705-MONOMER"/>
<dbReference type="Proteomes" id="UP000000444">
    <property type="component" value="Chromosome"/>
</dbReference>
<dbReference type="GO" id="GO:0022625">
    <property type="term" value="C:cytosolic large ribosomal subunit"/>
    <property type="evidence" value="ECO:0007669"/>
    <property type="project" value="TreeGrafter"/>
</dbReference>
<dbReference type="GO" id="GO:0003735">
    <property type="term" value="F:structural constituent of ribosome"/>
    <property type="evidence" value="ECO:0007669"/>
    <property type="project" value="InterPro"/>
</dbReference>
<dbReference type="GO" id="GO:0006412">
    <property type="term" value="P:translation"/>
    <property type="evidence" value="ECO:0007669"/>
    <property type="project" value="UniProtKB-UniRule"/>
</dbReference>
<dbReference type="FunFam" id="3.90.1030.10:FF:000002">
    <property type="entry name" value="50S ribosomal protein L17"/>
    <property type="match status" value="1"/>
</dbReference>
<dbReference type="Gene3D" id="3.90.1030.10">
    <property type="entry name" value="Ribosomal protein L17"/>
    <property type="match status" value="1"/>
</dbReference>
<dbReference type="HAMAP" id="MF_01368">
    <property type="entry name" value="Ribosomal_bL17"/>
    <property type="match status" value="1"/>
</dbReference>
<dbReference type="InterPro" id="IPR000456">
    <property type="entry name" value="Ribosomal_bL17"/>
</dbReference>
<dbReference type="InterPro" id="IPR047859">
    <property type="entry name" value="Ribosomal_bL17_CS"/>
</dbReference>
<dbReference type="InterPro" id="IPR036373">
    <property type="entry name" value="Ribosomal_bL17_sf"/>
</dbReference>
<dbReference type="NCBIfam" id="TIGR00059">
    <property type="entry name" value="L17"/>
    <property type="match status" value="1"/>
</dbReference>
<dbReference type="PANTHER" id="PTHR14413:SF16">
    <property type="entry name" value="LARGE RIBOSOMAL SUBUNIT PROTEIN BL17M"/>
    <property type="match status" value="1"/>
</dbReference>
<dbReference type="PANTHER" id="PTHR14413">
    <property type="entry name" value="RIBOSOMAL PROTEIN L17"/>
    <property type="match status" value="1"/>
</dbReference>
<dbReference type="Pfam" id="PF01196">
    <property type="entry name" value="Ribosomal_L17"/>
    <property type="match status" value="1"/>
</dbReference>
<dbReference type="SUPFAM" id="SSF64263">
    <property type="entry name" value="Prokaryotic ribosomal protein L17"/>
    <property type="match status" value="1"/>
</dbReference>
<dbReference type="PROSITE" id="PS01167">
    <property type="entry name" value="RIBOSOMAL_L17"/>
    <property type="match status" value="1"/>
</dbReference>
<accession>B9DM50</accession>
<protein>
    <recommendedName>
        <fullName evidence="1">Large ribosomal subunit protein bL17</fullName>
    </recommendedName>
    <alternativeName>
        <fullName evidence="2">50S ribosomal protein L17</fullName>
    </alternativeName>
</protein>
<organism>
    <name type="scientific">Staphylococcus carnosus (strain TM300)</name>
    <dbReference type="NCBI Taxonomy" id="396513"/>
    <lineage>
        <taxon>Bacteria</taxon>
        <taxon>Bacillati</taxon>
        <taxon>Bacillota</taxon>
        <taxon>Bacilli</taxon>
        <taxon>Bacillales</taxon>
        <taxon>Staphylococcaceae</taxon>
        <taxon>Staphylococcus</taxon>
    </lineage>
</organism>
<gene>
    <name evidence="1" type="primary">rplQ</name>
    <name type="ordered locus">Sca_1708</name>
</gene>